<comment type="function">
    <text evidence="6">Component of the mitochondrial ribosome (mitoribosome), a dedicated translation machinery responsible for the synthesis of mitochondrial genome-encoded proteins, including at least some of the essential transmembrane subunits of the mitochondrial respiratory chain. The mitoribosomes are attached to the mitochondrial inner membrane and translation products are cotranslationally integrated into the membrane.</text>
</comment>
<comment type="subunit">
    <text evidence="2 3">Component of the mitochondrial large ribosomal subunit (mt-LSU). Mature N.crassa 74S mitochondrial ribosomes consist of a small (37S) and a large (54S) subunit. The 37S small subunit contains a 16S ribosomal RNA (16S mt-rRNA) and 32 different proteins. The 54S large subunit contains a 23S rRNA (23S mt-rRNA) and 42 different proteins.</text>
</comment>
<comment type="subcellular location">
    <subcellularLocation>
        <location evidence="2 3">Mitochondrion</location>
    </subcellularLocation>
</comment>
<comment type="similarity">
    <text evidence="5">Belongs to the mitochondrion-specific ribosomal protein mL61 family.</text>
</comment>
<feature type="chain" id="PRO_0000458599" description="Large ribosomal subunit protein mL61">
    <location>
        <begin position="1"/>
        <end position="201"/>
    </location>
</feature>
<feature type="region of interest" description="Disordered" evidence="1">
    <location>
        <begin position="87"/>
        <end position="118"/>
    </location>
</feature>
<feature type="compositionally biased region" description="Polar residues" evidence="1">
    <location>
        <begin position="94"/>
        <end position="106"/>
    </location>
</feature>
<gene>
    <name type="primary">mrp49</name>
    <name type="ORF">NCU01650</name>
</gene>
<dbReference type="EMBL" id="CM002237">
    <property type="protein sequence ID" value="EAA27036.3"/>
    <property type="molecule type" value="Genomic_DNA"/>
</dbReference>
<dbReference type="RefSeq" id="XP_956272.3">
    <property type="nucleotide sequence ID" value="XM_951179.3"/>
</dbReference>
<dbReference type="PDB" id="6YWE">
    <property type="method" value="EM"/>
    <property type="resolution" value="2.99 A"/>
    <property type="chains" value="j=1-201"/>
</dbReference>
<dbReference type="PDB" id="6YWS">
    <property type="method" value="EM"/>
    <property type="resolution" value="2.74 A"/>
    <property type="chains" value="j=1-201"/>
</dbReference>
<dbReference type="PDB" id="6YWX">
    <property type="method" value="EM"/>
    <property type="resolution" value="3.10 A"/>
    <property type="chains" value="j=1-201"/>
</dbReference>
<dbReference type="PDB" id="6YWY">
    <property type="method" value="EM"/>
    <property type="resolution" value="3.05 A"/>
    <property type="chains" value="j=1-201"/>
</dbReference>
<dbReference type="PDBsum" id="6YWE"/>
<dbReference type="PDBsum" id="6YWS"/>
<dbReference type="PDBsum" id="6YWX"/>
<dbReference type="PDBsum" id="6YWY"/>
<dbReference type="EMDB" id="EMD-10965"/>
<dbReference type="EMDB" id="EMD-10973"/>
<dbReference type="EMDB" id="EMD-10978"/>
<dbReference type="EMDB" id="EMD-10985"/>
<dbReference type="SMR" id="Q7RWZ7"/>
<dbReference type="FunCoup" id="Q7RWZ7">
    <property type="interactions" value="85"/>
</dbReference>
<dbReference type="STRING" id="367110.Q7RWZ7"/>
<dbReference type="PaxDb" id="5141-EFNCRP00000001704"/>
<dbReference type="EnsemblFungi" id="EAA27036">
    <property type="protein sequence ID" value="EAA27036"/>
    <property type="gene ID" value="NCU01650"/>
</dbReference>
<dbReference type="GeneID" id="3872427"/>
<dbReference type="KEGG" id="ncr:NCU01650"/>
<dbReference type="VEuPathDB" id="FungiDB:NCU01650"/>
<dbReference type="HOGENOM" id="CLU_094283_1_0_1"/>
<dbReference type="InParanoid" id="Q7RWZ7"/>
<dbReference type="OrthoDB" id="1696305at2759"/>
<dbReference type="Proteomes" id="UP000001805">
    <property type="component" value="Chromosome 6, Linkage Group II"/>
</dbReference>
<dbReference type="GO" id="GO:0005739">
    <property type="term" value="C:mitochondrion"/>
    <property type="evidence" value="ECO:0007669"/>
    <property type="project" value="UniProtKB-SubCell"/>
</dbReference>
<dbReference type="GO" id="GO:1990904">
    <property type="term" value="C:ribonucleoprotein complex"/>
    <property type="evidence" value="ECO:0007669"/>
    <property type="project" value="UniProtKB-KW"/>
</dbReference>
<dbReference type="GO" id="GO:0005840">
    <property type="term" value="C:ribosome"/>
    <property type="evidence" value="ECO:0007669"/>
    <property type="project" value="UniProtKB-KW"/>
</dbReference>
<dbReference type="GO" id="GO:0003735">
    <property type="term" value="F:structural constituent of ribosome"/>
    <property type="evidence" value="ECO:0007669"/>
    <property type="project" value="InterPro"/>
</dbReference>
<dbReference type="InterPro" id="IPR007741">
    <property type="entry name" value="Ribosomal_mL43/mS25/NADH_DH"/>
</dbReference>
<dbReference type="InterPro" id="IPR040049">
    <property type="entry name" value="Ribosomal_mS25/mL61"/>
</dbReference>
<dbReference type="InterPro" id="IPR036249">
    <property type="entry name" value="Thioredoxin-like_sf"/>
</dbReference>
<dbReference type="PANTHER" id="PTHR13274">
    <property type="entry name" value="MITOCHONDRIAL RIBOSOMAL PROTEIN S25"/>
    <property type="match status" value="1"/>
</dbReference>
<dbReference type="PANTHER" id="PTHR13274:SF2">
    <property type="entry name" value="SMALL RIBOSOMAL SUBUNIT PROTEIN MS25"/>
    <property type="match status" value="1"/>
</dbReference>
<dbReference type="Pfam" id="PF05047">
    <property type="entry name" value="L51_S25_CI-B8"/>
    <property type="match status" value="1"/>
</dbReference>
<dbReference type="SMART" id="SM00916">
    <property type="entry name" value="L51_S25_CI-B8"/>
    <property type="match status" value="1"/>
</dbReference>
<dbReference type="SUPFAM" id="SSF52833">
    <property type="entry name" value="Thioredoxin-like"/>
    <property type="match status" value="1"/>
</dbReference>
<reference key="1">
    <citation type="journal article" date="2003" name="Nature">
        <title>The genome sequence of the filamentous fungus Neurospora crassa.</title>
        <authorList>
            <person name="Galagan J.E."/>
            <person name="Calvo S.E."/>
            <person name="Borkovich K.A."/>
            <person name="Selker E.U."/>
            <person name="Read N.D."/>
            <person name="Jaffe D.B."/>
            <person name="FitzHugh W."/>
            <person name="Ma L.-J."/>
            <person name="Smirnov S."/>
            <person name="Purcell S."/>
            <person name="Rehman B."/>
            <person name="Elkins T."/>
            <person name="Engels R."/>
            <person name="Wang S."/>
            <person name="Nielsen C.B."/>
            <person name="Butler J."/>
            <person name="Endrizzi M."/>
            <person name="Qui D."/>
            <person name="Ianakiev P."/>
            <person name="Bell-Pedersen D."/>
            <person name="Nelson M.A."/>
            <person name="Werner-Washburne M."/>
            <person name="Selitrennikoff C.P."/>
            <person name="Kinsey J.A."/>
            <person name="Braun E.L."/>
            <person name="Zelter A."/>
            <person name="Schulte U."/>
            <person name="Kothe G.O."/>
            <person name="Jedd G."/>
            <person name="Mewes H.-W."/>
            <person name="Staben C."/>
            <person name="Marcotte E."/>
            <person name="Greenberg D."/>
            <person name="Roy A."/>
            <person name="Foley K."/>
            <person name="Naylor J."/>
            <person name="Stange-Thomann N."/>
            <person name="Barrett R."/>
            <person name="Gnerre S."/>
            <person name="Kamal M."/>
            <person name="Kamvysselis M."/>
            <person name="Mauceli E.W."/>
            <person name="Bielke C."/>
            <person name="Rudd S."/>
            <person name="Frishman D."/>
            <person name="Krystofova S."/>
            <person name="Rasmussen C."/>
            <person name="Metzenberg R.L."/>
            <person name="Perkins D.D."/>
            <person name="Kroken S."/>
            <person name="Cogoni C."/>
            <person name="Macino G."/>
            <person name="Catcheside D.E.A."/>
            <person name="Li W."/>
            <person name="Pratt R.J."/>
            <person name="Osmani S.A."/>
            <person name="DeSouza C.P.C."/>
            <person name="Glass N.L."/>
            <person name="Orbach M.J."/>
            <person name="Berglund J.A."/>
            <person name="Voelker R."/>
            <person name="Yarden O."/>
            <person name="Plamann M."/>
            <person name="Seiler S."/>
            <person name="Dunlap J.C."/>
            <person name="Radford A."/>
            <person name="Aramayo R."/>
            <person name="Natvig D.O."/>
            <person name="Alex L.A."/>
            <person name="Mannhaupt G."/>
            <person name="Ebbole D.J."/>
            <person name="Freitag M."/>
            <person name="Paulsen I."/>
            <person name="Sachs M.S."/>
            <person name="Lander E.S."/>
            <person name="Nusbaum C."/>
            <person name="Birren B.W."/>
        </authorList>
    </citation>
    <scope>NUCLEOTIDE SEQUENCE [LARGE SCALE GENOMIC DNA]</scope>
    <source>
        <strain>ATCC 24698 / 74-OR23-1A / CBS 708.71 / DSM 1257 / FGSC 987</strain>
    </source>
</reference>
<reference key="2">
    <citation type="journal article" date="2006" name="FEMS Microbiol. Lett.">
        <title>Identification and comparative analysis of the large subunit mitochondrial ribosomal proteins of Neurospora crassa.</title>
        <authorList>
            <person name="Gan X."/>
            <person name="Arita K."/>
            <person name="Isono S."/>
            <person name="Kitakawa M."/>
            <person name="Yoshino K."/>
            <person name="Yonezawa K."/>
            <person name="Kato A."/>
            <person name="Inoue H."/>
            <person name="Isono K."/>
        </authorList>
    </citation>
    <scope>IDENTIFICATION IN THE MITOCHONDRIAL RIBOSOMAL LARGE COMPLEX</scope>
    <scope>IDENTIFICATION BY MASS SPECTROMETRY</scope>
</reference>
<reference evidence="7 8 9 10" key="3">
    <citation type="journal article" date="2020" name="Nat. Commun.">
        <title>Analysis of translating mitoribosome reveals functional characteristics of translation in mitochondria of fungi.</title>
        <authorList>
            <person name="Itoh Y."/>
            <person name="Naschberger A."/>
            <person name="Mortezaei N."/>
            <person name="Herrmann J.M."/>
            <person name="Amunts A."/>
        </authorList>
    </citation>
    <scope>STRUCTURE BY ELECTRON MICROSCOPY (2.74 ANGSTROMS)</scope>
</reference>
<proteinExistence type="evidence at protein level"/>
<name>RM49_NEUCR</name>
<keyword id="KW-0002">3D-structure</keyword>
<keyword id="KW-0496">Mitochondrion</keyword>
<keyword id="KW-1185">Reference proteome</keyword>
<keyword id="KW-0687">Ribonucleoprotein</keyword>
<keyword id="KW-0689">Ribosomal protein</keyword>
<organism>
    <name type="scientific">Neurospora crassa (strain ATCC 24698 / 74-OR23-1A / CBS 708.71 / DSM 1257 / FGSC 987)</name>
    <dbReference type="NCBI Taxonomy" id="367110"/>
    <lineage>
        <taxon>Eukaryota</taxon>
        <taxon>Fungi</taxon>
        <taxon>Dikarya</taxon>
        <taxon>Ascomycota</taxon>
        <taxon>Pezizomycotina</taxon>
        <taxon>Sordariomycetes</taxon>
        <taxon>Sordariomycetidae</taxon>
        <taxon>Sordariales</taxon>
        <taxon>Sordariaceae</taxon>
        <taxon>Neurospora</taxon>
    </lineage>
</organism>
<protein>
    <recommendedName>
        <fullName evidence="5">Large ribosomal subunit protein mL61</fullName>
    </recommendedName>
    <alternativeName>
        <fullName evidence="4">Large ribosomal subunit protein mL108</fullName>
    </alternativeName>
</protein>
<accession>Q7RWZ7</accession>
<sequence>MVGVIRRLNVVRELLNIRAGPGAALLPKEVTKVHMQFAHRIEEGHMGPRKFWRENLPKLKYWNPAVPMVINRTTDQKGPAVMTIYFRDDKDAKPSSTPFPTSSADGSSPAPKPAQGERIVTIDMKNRNSSVILKEFLDKTGAVAVQPTAKDEEEFREFEDLHRRSEIDRERIRKMNDAKKREKAMLAKAMSDAQSIKAASA</sequence>
<evidence type="ECO:0000256" key="1">
    <source>
        <dbReference type="SAM" id="MobiDB-lite"/>
    </source>
</evidence>
<evidence type="ECO:0000269" key="2">
    <source>
    </source>
</evidence>
<evidence type="ECO:0000269" key="3">
    <source>
    </source>
</evidence>
<evidence type="ECO:0000303" key="4">
    <source>
    </source>
</evidence>
<evidence type="ECO:0000305" key="5"/>
<evidence type="ECO:0000305" key="6">
    <source>
    </source>
</evidence>
<evidence type="ECO:0007744" key="7">
    <source>
        <dbReference type="PDB" id="6YWE"/>
    </source>
</evidence>
<evidence type="ECO:0007744" key="8">
    <source>
        <dbReference type="PDB" id="6YWS"/>
    </source>
</evidence>
<evidence type="ECO:0007744" key="9">
    <source>
        <dbReference type="PDB" id="6YWX"/>
    </source>
</evidence>
<evidence type="ECO:0007744" key="10">
    <source>
        <dbReference type="PDB" id="6YWY"/>
    </source>
</evidence>